<dbReference type="EC" id="1.5.1.5" evidence="1"/>
<dbReference type="EC" id="3.5.4.9" evidence="1"/>
<dbReference type="EMBL" id="CP000001">
    <property type="protein sequence ID" value="AAU16334.1"/>
    <property type="molecule type" value="Genomic_DNA"/>
</dbReference>
<dbReference type="RefSeq" id="WP_000226723.1">
    <property type="nucleotide sequence ID" value="NC_006274.1"/>
</dbReference>
<dbReference type="SMR" id="Q635A3"/>
<dbReference type="KEGG" id="bcz:BCE33L3934"/>
<dbReference type="PATRIC" id="fig|288681.22.peg.1463"/>
<dbReference type="UniPathway" id="UPA00193"/>
<dbReference type="Proteomes" id="UP000002612">
    <property type="component" value="Chromosome"/>
</dbReference>
<dbReference type="GO" id="GO:0005829">
    <property type="term" value="C:cytosol"/>
    <property type="evidence" value="ECO:0007669"/>
    <property type="project" value="TreeGrafter"/>
</dbReference>
<dbReference type="GO" id="GO:0004477">
    <property type="term" value="F:methenyltetrahydrofolate cyclohydrolase activity"/>
    <property type="evidence" value="ECO:0007669"/>
    <property type="project" value="UniProtKB-UniRule"/>
</dbReference>
<dbReference type="GO" id="GO:0004488">
    <property type="term" value="F:methylenetetrahydrofolate dehydrogenase (NADP+) activity"/>
    <property type="evidence" value="ECO:0007669"/>
    <property type="project" value="UniProtKB-UniRule"/>
</dbReference>
<dbReference type="GO" id="GO:0000105">
    <property type="term" value="P:L-histidine biosynthetic process"/>
    <property type="evidence" value="ECO:0007669"/>
    <property type="project" value="UniProtKB-KW"/>
</dbReference>
<dbReference type="GO" id="GO:0009086">
    <property type="term" value="P:methionine biosynthetic process"/>
    <property type="evidence" value="ECO:0007669"/>
    <property type="project" value="UniProtKB-KW"/>
</dbReference>
<dbReference type="GO" id="GO:0006164">
    <property type="term" value="P:purine nucleotide biosynthetic process"/>
    <property type="evidence" value="ECO:0007669"/>
    <property type="project" value="UniProtKB-KW"/>
</dbReference>
<dbReference type="GO" id="GO:0035999">
    <property type="term" value="P:tetrahydrofolate interconversion"/>
    <property type="evidence" value="ECO:0007669"/>
    <property type="project" value="UniProtKB-UniRule"/>
</dbReference>
<dbReference type="CDD" id="cd01080">
    <property type="entry name" value="NAD_bind_m-THF_DH_Cyclohyd"/>
    <property type="match status" value="1"/>
</dbReference>
<dbReference type="FunFam" id="3.40.50.10860:FF:000001">
    <property type="entry name" value="Bifunctional protein FolD"/>
    <property type="match status" value="1"/>
</dbReference>
<dbReference type="FunFam" id="3.40.50.720:FF:000006">
    <property type="entry name" value="Bifunctional protein FolD"/>
    <property type="match status" value="1"/>
</dbReference>
<dbReference type="Gene3D" id="3.40.50.10860">
    <property type="entry name" value="Leucine Dehydrogenase, chain A, domain 1"/>
    <property type="match status" value="1"/>
</dbReference>
<dbReference type="Gene3D" id="3.40.50.720">
    <property type="entry name" value="NAD(P)-binding Rossmann-like Domain"/>
    <property type="match status" value="1"/>
</dbReference>
<dbReference type="HAMAP" id="MF_01576">
    <property type="entry name" value="THF_DHG_CYH"/>
    <property type="match status" value="1"/>
</dbReference>
<dbReference type="InterPro" id="IPR046346">
    <property type="entry name" value="Aminoacid_DH-like_N_sf"/>
</dbReference>
<dbReference type="InterPro" id="IPR036291">
    <property type="entry name" value="NAD(P)-bd_dom_sf"/>
</dbReference>
<dbReference type="InterPro" id="IPR000672">
    <property type="entry name" value="THF_DH/CycHdrlase"/>
</dbReference>
<dbReference type="InterPro" id="IPR020630">
    <property type="entry name" value="THF_DH/CycHdrlase_cat_dom"/>
</dbReference>
<dbReference type="InterPro" id="IPR020867">
    <property type="entry name" value="THF_DH/CycHdrlase_CS"/>
</dbReference>
<dbReference type="InterPro" id="IPR020631">
    <property type="entry name" value="THF_DH/CycHdrlase_NAD-bd_dom"/>
</dbReference>
<dbReference type="NCBIfam" id="NF008058">
    <property type="entry name" value="PRK10792.1"/>
    <property type="match status" value="1"/>
</dbReference>
<dbReference type="NCBIfam" id="NF010783">
    <property type="entry name" value="PRK14186.1"/>
    <property type="match status" value="1"/>
</dbReference>
<dbReference type="PANTHER" id="PTHR48099:SF5">
    <property type="entry name" value="C-1-TETRAHYDROFOLATE SYNTHASE, CYTOPLASMIC"/>
    <property type="match status" value="1"/>
</dbReference>
<dbReference type="PANTHER" id="PTHR48099">
    <property type="entry name" value="C-1-TETRAHYDROFOLATE SYNTHASE, CYTOPLASMIC-RELATED"/>
    <property type="match status" value="1"/>
</dbReference>
<dbReference type="Pfam" id="PF00763">
    <property type="entry name" value="THF_DHG_CYH"/>
    <property type="match status" value="1"/>
</dbReference>
<dbReference type="Pfam" id="PF02882">
    <property type="entry name" value="THF_DHG_CYH_C"/>
    <property type="match status" value="1"/>
</dbReference>
<dbReference type="PRINTS" id="PR00085">
    <property type="entry name" value="THFDHDRGNASE"/>
</dbReference>
<dbReference type="SUPFAM" id="SSF53223">
    <property type="entry name" value="Aminoacid dehydrogenase-like, N-terminal domain"/>
    <property type="match status" value="1"/>
</dbReference>
<dbReference type="SUPFAM" id="SSF51735">
    <property type="entry name" value="NAD(P)-binding Rossmann-fold domains"/>
    <property type="match status" value="1"/>
</dbReference>
<dbReference type="PROSITE" id="PS00767">
    <property type="entry name" value="THF_DHG_CYH_2"/>
    <property type="match status" value="1"/>
</dbReference>
<accession>Q635A3</accession>
<feature type="chain" id="PRO_0000268268" description="Bifunctional protein FolD">
    <location>
        <begin position="1"/>
        <end position="286"/>
    </location>
</feature>
<feature type="binding site" evidence="1">
    <location>
        <begin position="165"/>
        <end position="167"/>
    </location>
    <ligand>
        <name>NADP(+)</name>
        <dbReference type="ChEBI" id="CHEBI:58349"/>
    </ligand>
</feature>
<feature type="binding site" evidence="1">
    <location>
        <position position="190"/>
    </location>
    <ligand>
        <name>NADP(+)</name>
        <dbReference type="ChEBI" id="CHEBI:58349"/>
    </ligand>
</feature>
<feature type="binding site" evidence="1">
    <location>
        <position position="231"/>
    </location>
    <ligand>
        <name>NADP(+)</name>
        <dbReference type="ChEBI" id="CHEBI:58349"/>
    </ligand>
</feature>
<reference key="1">
    <citation type="journal article" date="2006" name="J. Bacteriol.">
        <title>Pathogenomic sequence analysis of Bacillus cereus and Bacillus thuringiensis isolates closely related to Bacillus anthracis.</title>
        <authorList>
            <person name="Han C.S."/>
            <person name="Xie G."/>
            <person name="Challacombe J.F."/>
            <person name="Altherr M.R."/>
            <person name="Bhotika S.S."/>
            <person name="Bruce D."/>
            <person name="Campbell C.S."/>
            <person name="Campbell M.L."/>
            <person name="Chen J."/>
            <person name="Chertkov O."/>
            <person name="Cleland C."/>
            <person name="Dimitrijevic M."/>
            <person name="Doggett N.A."/>
            <person name="Fawcett J.J."/>
            <person name="Glavina T."/>
            <person name="Goodwin L.A."/>
            <person name="Hill K.K."/>
            <person name="Hitchcock P."/>
            <person name="Jackson P.J."/>
            <person name="Keim P."/>
            <person name="Kewalramani A.R."/>
            <person name="Longmire J."/>
            <person name="Lucas S."/>
            <person name="Malfatti S."/>
            <person name="McMurry K."/>
            <person name="Meincke L.J."/>
            <person name="Misra M."/>
            <person name="Moseman B.L."/>
            <person name="Mundt M."/>
            <person name="Munk A.C."/>
            <person name="Okinaka R.T."/>
            <person name="Parson-Quintana B."/>
            <person name="Reilly L.P."/>
            <person name="Richardson P."/>
            <person name="Robinson D.L."/>
            <person name="Rubin E."/>
            <person name="Saunders E."/>
            <person name="Tapia R."/>
            <person name="Tesmer J.G."/>
            <person name="Thayer N."/>
            <person name="Thompson L.S."/>
            <person name="Tice H."/>
            <person name="Ticknor L.O."/>
            <person name="Wills P.L."/>
            <person name="Brettin T.S."/>
            <person name="Gilna P."/>
        </authorList>
    </citation>
    <scope>NUCLEOTIDE SEQUENCE [LARGE SCALE GENOMIC DNA]</scope>
    <source>
        <strain>ZK / E33L</strain>
    </source>
</reference>
<organism>
    <name type="scientific">Bacillus cereus (strain ZK / E33L)</name>
    <dbReference type="NCBI Taxonomy" id="288681"/>
    <lineage>
        <taxon>Bacteria</taxon>
        <taxon>Bacillati</taxon>
        <taxon>Bacillota</taxon>
        <taxon>Bacilli</taxon>
        <taxon>Bacillales</taxon>
        <taxon>Bacillaceae</taxon>
        <taxon>Bacillus</taxon>
        <taxon>Bacillus cereus group</taxon>
    </lineage>
</organism>
<protein>
    <recommendedName>
        <fullName evidence="1">Bifunctional protein FolD</fullName>
    </recommendedName>
    <domain>
        <recommendedName>
            <fullName evidence="1">Methylenetetrahydrofolate dehydrogenase</fullName>
            <ecNumber evidence="1">1.5.1.5</ecNumber>
        </recommendedName>
    </domain>
    <domain>
        <recommendedName>
            <fullName evidence="1">Methenyltetrahydrofolate cyclohydrolase</fullName>
            <ecNumber evidence="1">3.5.4.9</ecNumber>
        </recommendedName>
    </domain>
</protein>
<evidence type="ECO:0000255" key="1">
    <source>
        <dbReference type="HAMAP-Rule" id="MF_01576"/>
    </source>
</evidence>
<keyword id="KW-0028">Amino-acid biosynthesis</keyword>
<keyword id="KW-0368">Histidine biosynthesis</keyword>
<keyword id="KW-0378">Hydrolase</keyword>
<keyword id="KW-0486">Methionine biosynthesis</keyword>
<keyword id="KW-0511">Multifunctional enzyme</keyword>
<keyword id="KW-0521">NADP</keyword>
<keyword id="KW-0554">One-carbon metabolism</keyword>
<keyword id="KW-0560">Oxidoreductase</keyword>
<keyword id="KW-0658">Purine biosynthesis</keyword>
<proteinExistence type="inferred from homology"/>
<name>FOLD_BACCZ</name>
<comment type="function">
    <text evidence="1">Catalyzes the oxidation of 5,10-methylenetetrahydrofolate to 5,10-methenyltetrahydrofolate and then the hydrolysis of 5,10-methenyltetrahydrofolate to 10-formyltetrahydrofolate.</text>
</comment>
<comment type="catalytic activity">
    <reaction evidence="1">
        <text>(6R)-5,10-methylene-5,6,7,8-tetrahydrofolate + NADP(+) = (6R)-5,10-methenyltetrahydrofolate + NADPH</text>
        <dbReference type="Rhea" id="RHEA:22812"/>
        <dbReference type="ChEBI" id="CHEBI:15636"/>
        <dbReference type="ChEBI" id="CHEBI:57455"/>
        <dbReference type="ChEBI" id="CHEBI:57783"/>
        <dbReference type="ChEBI" id="CHEBI:58349"/>
        <dbReference type="EC" id="1.5.1.5"/>
    </reaction>
</comment>
<comment type="catalytic activity">
    <reaction evidence="1">
        <text>(6R)-5,10-methenyltetrahydrofolate + H2O = (6R)-10-formyltetrahydrofolate + H(+)</text>
        <dbReference type="Rhea" id="RHEA:23700"/>
        <dbReference type="ChEBI" id="CHEBI:15377"/>
        <dbReference type="ChEBI" id="CHEBI:15378"/>
        <dbReference type="ChEBI" id="CHEBI:57455"/>
        <dbReference type="ChEBI" id="CHEBI:195366"/>
        <dbReference type="EC" id="3.5.4.9"/>
    </reaction>
</comment>
<comment type="pathway">
    <text evidence="1">One-carbon metabolism; tetrahydrofolate interconversion.</text>
</comment>
<comment type="subunit">
    <text evidence="1">Homodimer.</text>
</comment>
<comment type="similarity">
    <text evidence="1">Belongs to the tetrahydrofolate dehydrogenase/cyclohydrolase family.</text>
</comment>
<gene>
    <name evidence="1" type="primary">folD</name>
    <name type="ordered locus">BCE33L3934</name>
</gene>
<sequence length="286" mass="31181">MVAVIIKGNEVAEKKRAQLKEEVVKLKEQGIVPGLAVILVGEDPASRSYVKGKEKGCEQVGIYSELIEFPETITEERLLTEIDRLNGDDRINGILVQLPLPKHIEEKAIIERISPEKDVDGFHPISVGRMMTGQDTFLPCTPHGIVELVKETNLDISGKHVVVIGRSNIVGKPVGQLFLNENATVTYCHSKTQNMKELTKLADILIVAVGRPKMVTADYIKEGAVVIDVGVNRLETGKLCGDVDFDNVLDVAGYITPVPKGVGPMTITMLLHNTVESAKRAGVVCK</sequence>